<gene>
    <name evidence="1" type="primary">ruvC</name>
    <name type="ordered locus">MRA_2623</name>
</gene>
<feature type="chain" id="PRO_1000002780" description="Crossover junction endodeoxyribonuclease RuvC">
    <location>
        <begin position="1"/>
        <end position="188"/>
    </location>
</feature>
<feature type="active site" evidence="1">
    <location>
        <position position="7"/>
    </location>
</feature>
<feature type="active site" evidence="1">
    <location>
        <position position="68"/>
    </location>
</feature>
<feature type="active site" evidence="1">
    <location>
        <position position="141"/>
    </location>
</feature>
<feature type="binding site" evidence="1">
    <location>
        <position position="7"/>
    </location>
    <ligand>
        <name>Mg(2+)</name>
        <dbReference type="ChEBI" id="CHEBI:18420"/>
        <label>1</label>
    </ligand>
</feature>
<feature type="binding site" evidence="1">
    <location>
        <position position="68"/>
    </location>
    <ligand>
        <name>Mg(2+)</name>
        <dbReference type="ChEBI" id="CHEBI:18420"/>
        <label>2</label>
    </ligand>
</feature>
<feature type="binding site" evidence="1">
    <location>
        <position position="141"/>
    </location>
    <ligand>
        <name>Mg(2+)</name>
        <dbReference type="ChEBI" id="CHEBI:18420"/>
        <label>1</label>
    </ligand>
</feature>
<accession>A5U5U4</accession>
<organism>
    <name type="scientific">Mycobacterium tuberculosis (strain ATCC 25177 / H37Ra)</name>
    <dbReference type="NCBI Taxonomy" id="419947"/>
    <lineage>
        <taxon>Bacteria</taxon>
        <taxon>Bacillati</taxon>
        <taxon>Actinomycetota</taxon>
        <taxon>Actinomycetes</taxon>
        <taxon>Mycobacteriales</taxon>
        <taxon>Mycobacteriaceae</taxon>
        <taxon>Mycobacterium</taxon>
        <taxon>Mycobacterium tuberculosis complex</taxon>
    </lineage>
</organism>
<keyword id="KW-0963">Cytoplasm</keyword>
<keyword id="KW-0227">DNA damage</keyword>
<keyword id="KW-0233">DNA recombination</keyword>
<keyword id="KW-0234">DNA repair</keyword>
<keyword id="KW-0238">DNA-binding</keyword>
<keyword id="KW-0255">Endonuclease</keyword>
<keyword id="KW-0378">Hydrolase</keyword>
<keyword id="KW-0460">Magnesium</keyword>
<keyword id="KW-0479">Metal-binding</keyword>
<keyword id="KW-0540">Nuclease</keyword>
<keyword id="KW-1185">Reference proteome</keyword>
<comment type="function">
    <text evidence="1">The RuvA-RuvB-RuvC complex processes Holliday junction (HJ) DNA during genetic recombination and DNA repair. Endonuclease that resolves HJ intermediates. Cleaves cruciform DNA by making single-stranded nicks across the HJ at symmetrical positions within the homologous arms, yielding a 5'-phosphate and a 3'-hydroxyl group; requires a central core of homology in the junction. The consensus cleavage sequence is 5'-(A/T)TT(C/G)-3'. Cleavage occurs on the 3'-side of the TT dinucleotide at the point of strand exchange. HJ branch migration catalyzed by RuvA-RuvB allows RuvC to scan DNA until it finds its consensus sequence, where it cleaves and resolves the cruciform DNA.</text>
</comment>
<comment type="catalytic activity">
    <reaction evidence="1">
        <text>Endonucleolytic cleavage at a junction such as a reciprocal single-stranded crossover between two homologous DNA duplexes (Holliday junction).</text>
        <dbReference type="EC" id="3.1.21.10"/>
    </reaction>
</comment>
<comment type="cofactor">
    <cofactor evidence="1">
        <name>Mg(2+)</name>
        <dbReference type="ChEBI" id="CHEBI:18420"/>
    </cofactor>
    <text evidence="1">Binds 2 Mg(2+) ion per subunit.</text>
</comment>
<comment type="subunit">
    <text evidence="1">Homodimer which binds Holliday junction (HJ) DNA. The HJ becomes 2-fold symmetrical on binding to RuvC with unstacked arms; it has a different conformation from HJ DNA in complex with RuvA. In the full resolvosome a probable DNA-RuvA(4)-RuvB(12)-RuvC(2) complex forms which resolves the HJ.</text>
</comment>
<comment type="subcellular location">
    <subcellularLocation>
        <location evidence="1">Cytoplasm</location>
    </subcellularLocation>
</comment>
<comment type="similarity">
    <text evidence="1">Belongs to the RuvC family.</text>
</comment>
<evidence type="ECO:0000255" key="1">
    <source>
        <dbReference type="HAMAP-Rule" id="MF_00034"/>
    </source>
</evidence>
<protein>
    <recommendedName>
        <fullName evidence="1">Crossover junction endodeoxyribonuclease RuvC</fullName>
        <ecNumber evidence="1">3.1.21.10</ecNumber>
    </recommendedName>
    <alternativeName>
        <fullName evidence="1">Holliday junction nuclease RuvC</fullName>
    </alternativeName>
    <alternativeName>
        <fullName evidence="1">Holliday junction resolvase RuvC</fullName>
    </alternativeName>
</protein>
<proteinExistence type="inferred from homology"/>
<sequence>MRVMGVDPGLTRCGLSLIESGRGRQLTALDVDVVRTPSDAALAQRLLAISDAVEHWLDTHHPEVVAIERVFSQLNVTTVMGTAQAGGVIALAAAKRGVDVHFHTPSEVKAAVTGNGSADKAQVTAMVTKILALQAKPTPADAADALALAICHCWRAPTIARMAEATSRAEARAAQQRHAYLAKLKAAR</sequence>
<dbReference type="EC" id="3.1.21.10" evidence="1"/>
<dbReference type="EMBL" id="CP000611">
    <property type="protein sequence ID" value="ABQ74394.1"/>
    <property type="molecule type" value="Genomic_DNA"/>
</dbReference>
<dbReference type="RefSeq" id="WP_003413426.1">
    <property type="nucleotide sequence ID" value="NZ_CP016972.1"/>
</dbReference>
<dbReference type="SMR" id="A5U5U4"/>
<dbReference type="GeneID" id="45426596"/>
<dbReference type="KEGG" id="mra:MRA_2623"/>
<dbReference type="eggNOG" id="COG0817">
    <property type="taxonomic scope" value="Bacteria"/>
</dbReference>
<dbReference type="HOGENOM" id="CLU_091257_0_2_11"/>
<dbReference type="Proteomes" id="UP000001988">
    <property type="component" value="Chromosome"/>
</dbReference>
<dbReference type="GO" id="GO:0005737">
    <property type="term" value="C:cytoplasm"/>
    <property type="evidence" value="ECO:0007669"/>
    <property type="project" value="UniProtKB-SubCell"/>
</dbReference>
<dbReference type="GO" id="GO:0048476">
    <property type="term" value="C:Holliday junction resolvase complex"/>
    <property type="evidence" value="ECO:0007669"/>
    <property type="project" value="UniProtKB-UniRule"/>
</dbReference>
<dbReference type="GO" id="GO:0008821">
    <property type="term" value="F:crossover junction DNA endonuclease activity"/>
    <property type="evidence" value="ECO:0007669"/>
    <property type="project" value="UniProtKB-UniRule"/>
</dbReference>
<dbReference type="GO" id="GO:0003677">
    <property type="term" value="F:DNA binding"/>
    <property type="evidence" value="ECO:0007669"/>
    <property type="project" value="UniProtKB-KW"/>
</dbReference>
<dbReference type="GO" id="GO:0000287">
    <property type="term" value="F:magnesium ion binding"/>
    <property type="evidence" value="ECO:0007669"/>
    <property type="project" value="UniProtKB-UniRule"/>
</dbReference>
<dbReference type="GO" id="GO:0006310">
    <property type="term" value="P:DNA recombination"/>
    <property type="evidence" value="ECO:0007669"/>
    <property type="project" value="UniProtKB-UniRule"/>
</dbReference>
<dbReference type="GO" id="GO:0006281">
    <property type="term" value="P:DNA repair"/>
    <property type="evidence" value="ECO:0007669"/>
    <property type="project" value="UniProtKB-UniRule"/>
</dbReference>
<dbReference type="CDD" id="cd16962">
    <property type="entry name" value="RuvC"/>
    <property type="match status" value="1"/>
</dbReference>
<dbReference type="FunFam" id="3.30.420.10:FF:000002">
    <property type="entry name" value="Crossover junction endodeoxyribonuclease RuvC"/>
    <property type="match status" value="1"/>
</dbReference>
<dbReference type="Gene3D" id="3.30.420.10">
    <property type="entry name" value="Ribonuclease H-like superfamily/Ribonuclease H"/>
    <property type="match status" value="1"/>
</dbReference>
<dbReference type="HAMAP" id="MF_00034">
    <property type="entry name" value="RuvC"/>
    <property type="match status" value="1"/>
</dbReference>
<dbReference type="InterPro" id="IPR012337">
    <property type="entry name" value="RNaseH-like_sf"/>
</dbReference>
<dbReference type="InterPro" id="IPR036397">
    <property type="entry name" value="RNaseH_sf"/>
</dbReference>
<dbReference type="InterPro" id="IPR020563">
    <property type="entry name" value="X-over_junc_endoDNase_Mg_BS"/>
</dbReference>
<dbReference type="InterPro" id="IPR002176">
    <property type="entry name" value="X-over_junc_endoDNase_RuvC"/>
</dbReference>
<dbReference type="NCBIfam" id="TIGR00228">
    <property type="entry name" value="ruvC"/>
    <property type="match status" value="1"/>
</dbReference>
<dbReference type="PANTHER" id="PTHR30194">
    <property type="entry name" value="CROSSOVER JUNCTION ENDODEOXYRIBONUCLEASE RUVC"/>
    <property type="match status" value="1"/>
</dbReference>
<dbReference type="PANTHER" id="PTHR30194:SF3">
    <property type="entry name" value="CROSSOVER JUNCTION ENDODEOXYRIBONUCLEASE RUVC"/>
    <property type="match status" value="1"/>
</dbReference>
<dbReference type="Pfam" id="PF02075">
    <property type="entry name" value="RuvC"/>
    <property type="match status" value="1"/>
</dbReference>
<dbReference type="PRINTS" id="PR00696">
    <property type="entry name" value="RSOLVASERUVC"/>
</dbReference>
<dbReference type="SUPFAM" id="SSF53098">
    <property type="entry name" value="Ribonuclease H-like"/>
    <property type="match status" value="1"/>
</dbReference>
<dbReference type="PROSITE" id="PS01321">
    <property type="entry name" value="RUVC"/>
    <property type="match status" value="1"/>
</dbReference>
<name>RUVC_MYCTA</name>
<reference key="1">
    <citation type="journal article" date="2008" name="PLoS ONE">
        <title>Genetic basis of virulence attenuation revealed by comparative genomic analysis of Mycobacterium tuberculosis strain H37Ra versus H37Rv.</title>
        <authorList>
            <person name="Zheng H."/>
            <person name="Lu L."/>
            <person name="Wang B."/>
            <person name="Pu S."/>
            <person name="Zhang X."/>
            <person name="Zhu G."/>
            <person name="Shi W."/>
            <person name="Zhang L."/>
            <person name="Wang H."/>
            <person name="Wang S."/>
            <person name="Zhao G."/>
            <person name="Zhang Y."/>
        </authorList>
    </citation>
    <scope>NUCLEOTIDE SEQUENCE [LARGE SCALE GENOMIC DNA]</scope>
    <source>
        <strain>ATCC 25177 / H37Ra</strain>
    </source>
</reference>